<gene>
    <name evidence="1" type="primary">fliW</name>
    <name type="ordered locus">Dhaf_4192</name>
</gene>
<feature type="chain" id="PRO_1000164468" description="Flagellar assembly factor FliW">
    <location>
        <begin position="1"/>
        <end position="152"/>
    </location>
</feature>
<proteinExistence type="inferred from homology"/>
<sequence>MKIESTRFGTLEVTSEQIIRFPHGIPGFLDEKAFVHLPHDENSPFSFLQSTAEADLSFLLVEPFSFIPEYEFVLGDEMAGELELSEENPPQVFLIGTVREKITDMTVNLLAPIVVNRNKGIGRQIILDKTEYSIRHKLFPEAQAQGTPEGGE</sequence>
<dbReference type="EMBL" id="CP001336">
    <property type="protein sequence ID" value="ACL22199.1"/>
    <property type="molecule type" value="Genomic_DNA"/>
</dbReference>
<dbReference type="RefSeq" id="WP_015945096.1">
    <property type="nucleotide sequence ID" value="NC_011830.1"/>
</dbReference>
<dbReference type="SMR" id="B8FTV7"/>
<dbReference type="KEGG" id="dhd:Dhaf_4192"/>
<dbReference type="HOGENOM" id="CLU_112356_0_2_9"/>
<dbReference type="Proteomes" id="UP000007726">
    <property type="component" value="Chromosome"/>
</dbReference>
<dbReference type="GO" id="GO:0005737">
    <property type="term" value="C:cytoplasm"/>
    <property type="evidence" value="ECO:0007669"/>
    <property type="project" value="UniProtKB-SubCell"/>
</dbReference>
<dbReference type="GO" id="GO:0044780">
    <property type="term" value="P:bacterial-type flagellum assembly"/>
    <property type="evidence" value="ECO:0007669"/>
    <property type="project" value="UniProtKB-UniRule"/>
</dbReference>
<dbReference type="GO" id="GO:0006417">
    <property type="term" value="P:regulation of translation"/>
    <property type="evidence" value="ECO:0007669"/>
    <property type="project" value="UniProtKB-KW"/>
</dbReference>
<dbReference type="Gene3D" id="2.30.290.10">
    <property type="entry name" value="BH3618-like"/>
    <property type="match status" value="1"/>
</dbReference>
<dbReference type="HAMAP" id="MF_01185">
    <property type="entry name" value="FliW"/>
    <property type="match status" value="1"/>
</dbReference>
<dbReference type="InterPro" id="IPR003775">
    <property type="entry name" value="Flagellar_assembly_factor_FliW"/>
</dbReference>
<dbReference type="InterPro" id="IPR024046">
    <property type="entry name" value="Flagellar_assmbl_FliW_dom_sf"/>
</dbReference>
<dbReference type="NCBIfam" id="NF009793">
    <property type="entry name" value="PRK13285.1-1"/>
    <property type="match status" value="1"/>
</dbReference>
<dbReference type="PANTHER" id="PTHR39190">
    <property type="entry name" value="FLAGELLAR ASSEMBLY FACTOR FLIW"/>
    <property type="match status" value="1"/>
</dbReference>
<dbReference type="PANTHER" id="PTHR39190:SF1">
    <property type="entry name" value="FLAGELLAR ASSEMBLY FACTOR FLIW"/>
    <property type="match status" value="1"/>
</dbReference>
<dbReference type="Pfam" id="PF02623">
    <property type="entry name" value="FliW"/>
    <property type="match status" value="1"/>
</dbReference>
<dbReference type="SUPFAM" id="SSF141457">
    <property type="entry name" value="BH3618-like"/>
    <property type="match status" value="1"/>
</dbReference>
<organism>
    <name type="scientific">Desulfitobacterium hafniense (strain DSM 10664 / DCB-2)</name>
    <dbReference type="NCBI Taxonomy" id="272564"/>
    <lineage>
        <taxon>Bacteria</taxon>
        <taxon>Bacillati</taxon>
        <taxon>Bacillota</taxon>
        <taxon>Clostridia</taxon>
        <taxon>Eubacteriales</taxon>
        <taxon>Desulfitobacteriaceae</taxon>
        <taxon>Desulfitobacterium</taxon>
    </lineage>
</organism>
<evidence type="ECO:0000255" key="1">
    <source>
        <dbReference type="HAMAP-Rule" id="MF_01185"/>
    </source>
</evidence>
<name>FLIW_DESHD</name>
<keyword id="KW-1005">Bacterial flagellum biogenesis</keyword>
<keyword id="KW-0143">Chaperone</keyword>
<keyword id="KW-0963">Cytoplasm</keyword>
<keyword id="KW-0810">Translation regulation</keyword>
<accession>B8FTV7</accession>
<protein>
    <recommendedName>
        <fullName evidence="1">Flagellar assembly factor FliW</fullName>
    </recommendedName>
</protein>
<comment type="function">
    <text evidence="1">Acts as an anti-CsrA protein, binds CsrA and prevents it from repressing translation of its target genes, one of which is flagellin. Binds to flagellin and participates in the assembly of the flagellum.</text>
</comment>
<comment type="subunit">
    <text evidence="1">Interacts with translational regulator CsrA and flagellin(s).</text>
</comment>
<comment type="subcellular location">
    <subcellularLocation>
        <location evidence="1">Cytoplasm</location>
    </subcellularLocation>
</comment>
<comment type="similarity">
    <text evidence="1">Belongs to the FliW family.</text>
</comment>
<reference key="1">
    <citation type="journal article" date="2012" name="BMC Microbiol.">
        <title>Genome sequence of Desulfitobacterium hafniense DCB-2, a Gram-positive anaerobe capable of dehalogenation and metal reduction.</title>
        <authorList>
            <person name="Kim S.H."/>
            <person name="Harzman C."/>
            <person name="Davis J.K."/>
            <person name="Hutcheson R."/>
            <person name="Broderick J.B."/>
            <person name="Marsh T.L."/>
            <person name="Tiedje J.M."/>
        </authorList>
    </citation>
    <scope>NUCLEOTIDE SEQUENCE [LARGE SCALE GENOMIC DNA]</scope>
    <source>
        <strain>DSM 10664 / DCB-2</strain>
    </source>
</reference>